<protein>
    <recommendedName>
        <fullName>NADH dehydrogenase [ubiquinone] 1 beta subcomplex subunit 9</fullName>
    </recommendedName>
    <alternativeName>
        <fullName>Complex I-B22</fullName>
        <shortName>CI-B22</shortName>
    </alternativeName>
    <alternativeName>
        <fullName>NADH-ubiquinone oxidoreductase B22 subunit</fullName>
    </alternativeName>
</protein>
<organism>
    <name type="scientific">Pan troglodytes</name>
    <name type="common">Chimpanzee</name>
    <dbReference type="NCBI Taxonomy" id="9598"/>
    <lineage>
        <taxon>Eukaryota</taxon>
        <taxon>Metazoa</taxon>
        <taxon>Chordata</taxon>
        <taxon>Craniata</taxon>
        <taxon>Vertebrata</taxon>
        <taxon>Euteleostomi</taxon>
        <taxon>Mammalia</taxon>
        <taxon>Eutheria</taxon>
        <taxon>Euarchontoglires</taxon>
        <taxon>Primates</taxon>
        <taxon>Haplorrhini</taxon>
        <taxon>Catarrhini</taxon>
        <taxon>Hominidae</taxon>
        <taxon>Pan</taxon>
    </lineage>
</organism>
<proteinExistence type="evidence at transcript level"/>
<reference key="1">
    <citation type="journal article" date="2006" name="Gene">
        <title>Adaptive selection of mitochondrial complex I subunits during primate radiation.</title>
        <authorList>
            <person name="Mishmar D."/>
            <person name="Ruiz-Pesini E."/>
            <person name="Mondragon-Palomino M."/>
            <person name="Procaccio V."/>
            <person name="Gaut B."/>
            <person name="Wallace D.C."/>
        </authorList>
    </citation>
    <scope>NUCLEOTIDE SEQUENCE [MRNA]</scope>
</reference>
<keyword id="KW-0007">Acetylation</keyword>
<keyword id="KW-0249">Electron transport</keyword>
<keyword id="KW-0472">Membrane</keyword>
<keyword id="KW-0496">Mitochondrion</keyword>
<keyword id="KW-0999">Mitochondrion inner membrane</keyword>
<keyword id="KW-0597">Phosphoprotein</keyword>
<keyword id="KW-1185">Reference proteome</keyword>
<keyword id="KW-0679">Respiratory chain</keyword>
<keyword id="KW-0813">Transport</keyword>
<gene>
    <name type="primary">NDUFB9</name>
</gene>
<name>NDUB9_PANTR</name>
<accession>Q0MQF0</accession>
<comment type="function">
    <text evidence="1">Accessory subunit of the mitochondrial membrane respiratory chain NADH dehydrogenase (Complex I), that is believed to be not involved in catalysis. Complex I functions in the transfer of electrons from NADH to the respiratory chain. The immediate electron acceptor for the enzyme is believed to be ubiquinone.</text>
</comment>
<comment type="subunit">
    <text evidence="1">Mammalian complex I is composed of 45 different subunits.</text>
</comment>
<comment type="subcellular location">
    <subcellularLocation>
        <location evidence="1">Mitochondrion inner membrane</location>
        <topology evidence="1">Peripheral membrane protein</topology>
        <orientation evidence="1">Matrix side</orientation>
    </subcellularLocation>
</comment>
<comment type="similarity">
    <text evidence="3">Belongs to the complex I LYR family.</text>
</comment>
<dbReference type="EMBL" id="DQ885684">
    <property type="protein sequence ID" value="ABH12193.1"/>
    <property type="molecule type" value="mRNA"/>
</dbReference>
<dbReference type="RefSeq" id="NP_001065267.1">
    <property type="nucleotide sequence ID" value="NM_001071799.1"/>
</dbReference>
<dbReference type="SMR" id="Q0MQF0"/>
<dbReference type="FunCoup" id="Q0MQF0">
    <property type="interactions" value="1610"/>
</dbReference>
<dbReference type="STRING" id="9598.ENSPTRP00000035176"/>
<dbReference type="PaxDb" id="9598-ENSPTRP00000035176"/>
<dbReference type="Ensembl" id="ENSPTRT00000038050.3">
    <property type="protein sequence ID" value="ENSPTRP00000035176.2"/>
    <property type="gene ID" value="ENSPTRG00000020569.3"/>
</dbReference>
<dbReference type="GeneID" id="464380"/>
<dbReference type="KEGG" id="ptr:464380"/>
<dbReference type="CTD" id="4715"/>
<dbReference type="VGNC" id="VGNC:6571">
    <property type="gene designation" value="NDUFB9"/>
</dbReference>
<dbReference type="eggNOG" id="KOG3466">
    <property type="taxonomic scope" value="Eukaryota"/>
</dbReference>
<dbReference type="GeneTree" id="ENSGT00390000005809"/>
<dbReference type="HOGENOM" id="CLU_108081_0_0_1"/>
<dbReference type="InParanoid" id="Q0MQF0"/>
<dbReference type="OMA" id="CVFRDKY"/>
<dbReference type="OrthoDB" id="15090at9604"/>
<dbReference type="TreeFam" id="TF315148"/>
<dbReference type="Proteomes" id="UP000002277">
    <property type="component" value="Chromosome 8"/>
</dbReference>
<dbReference type="Bgee" id="ENSPTRG00000020569">
    <property type="expression patterns" value="Expressed in primary visual cortex and 20 other cell types or tissues"/>
</dbReference>
<dbReference type="GO" id="GO:0005743">
    <property type="term" value="C:mitochondrial inner membrane"/>
    <property type="evidence" value="ECO:0007669"/>
    <property type="project" value="UniProtKB-SubCell"/>
</dbReference>
<dbReference type="GO" id="GO:0045271">
    <property type="term" value="C:respiratory chain complex I"/>
    <property type="evidence" value="ECO:0000250"/>
    <property type="project" value="UniProtKB"/>
</dbReference>
<dbReference type="GO" id="GO:0006120">
    <property type="term" value="P:mitochondrial electron transport, NADH to ubiquinone"/>
    <property type="evidence" value="ECO:0007669"/>
    <property type="project" value="InterPro"/>
</dbReference>
<dbReference type="CDD" id="cd20263">
    <property type="entry name" value="Complex1_LYR_NDUFB9_LYRM3"/>
    <property type="match status" value="1"/>
</dbReference>
<dbReference type="InterPro" id="IPR008011">
    <property type="entry name" value="Complex1_LYR_dom"/>
</dbReference>
<dbReference type="InterPro" id="IPR045292">
    <property type="entry name" value="Complex1_LYR_NDUFB9_LYRM3"/>
</dbReference>
<dbReference type="InterPro" id="IPR033034">
    <property type="entry name" value="NDUFB9"/>
</dbReference>
<dbReference type="PANTHER" id="PTHR12868:SF1">
    <property type="entry name" value="NADH DEHYDROGENASE [UBIQUINONE] 1 BETA SUBCOMPLEX SUBUNIT 9"/>
    <property type="match status" value="1"/>
</dbReference>
<dbReference type="PANTHER" id="PTHR12868">
    <property type="entry name" value="NADH-UBIQUINONE OXIDOREDUCTASE B22 SUBUNIT"/>
    <property type="match status" value="1"/>
</dbReference>
<dbReference type="Pfam" id="PF05347">
    <property type="entry name" value="Complex1_LYR"/>
    <property type="match status" value="1"/>
</dbReference>
<sequence>MAFLASGPYLTHQQKVLRLYKRALRHLESWCVQRDKYRYFACLMRARFEEHKNEKDMAKATQLLKEAEEEFWYRQHPQPYIFPDSPGGTSYERYDCYKVPEWCLDDWHPSEKAMYPDYFAKREKWKKLRRESWEREVKQLQEETPPGGPLTEALPPARKEGDLPPLWWYIVTRPRERPM</sequence>
<evidence type="ECO:0000250" key="1">
    <source>
        <dbReference type="UniProtKB" id="Q9Y6M9"/>
    </source>
</evidence>
<evidence type="ECO:0000256" key="2">
    <source>
        <dbReference type="SAM" id="MobiDB-lite"/>
    </source>
</evidence>
<evidence type="ECO:0000305" key="3"/>
<feature type="initiator methionine" description="Removed" evidence="1">
    <location>
        <position position="1"/>
    </location>
</feature>
<feature type="chain" id="PRO_0000251172" description="NADH dehydrogenase [ubiquinone] 1 beta subcomplex subunit 9">
    <location>
        <begin position="2"/>
        <end position="179"/>
    </location>
</feature>
<feature type="region of interest" description="Disordered" evidence="2">
    <location>
        <begin position="136"/>
        <end position="162"/>
    </location>
</feature>
<feature type="modified residue" description="N-acetylalanine" evidence="1">
    <location>
        <position position="2"/>
    </location>
</feature>
<feature type="modified residue" description="Phosphoserine" evidence="1">
    <location>
        <position position="85"/>
    </location>
</feature>